<proteinExistence type="evidence at transcript level"/>
<feature type="chain" id="PRO_0000215824" description="Uncharacterized protein C1711.08">
    <location>
        <begin position="1"/>
        <end position="336"/>
    </location>
</feature>
<feature type="region of interest" description="Disordered" evidence="1">
    <location>
        <begin position="162"/>
        <end position="195"/>
    </location>
</feature>
<feature type="compositionally biased region" description="Low complexity" evidence="1">
    <location>
        <begin position="169"/>
        <end position="187"/>
    </location>
</feature>
<gene>
    <name type="ORF">SPBC1711.08</name>
</gene>
<comment type="similarity">
    <text evidence="2">Belongs to the AHA1 family.</text>
</comment>
<comment type="sequence caution" evidence="2">
    <conflict type="erroneous initiation">
        <sequence resource="EMBL-CDS" id="BAA13862"/>
    </conflict>
</comment>
<sequence length="336" mass="37420">MSATSINPNNWHWTSKDCRVWSHEYFNKELPKIQASEGPTSARITQVNSCEGDVDVSMRKRKVITIFDLKIQMEFKGETKDGVEATGSITCPELSYDLGYSDYVFDIDIYSASKEKEPIKELVREKIIPQIRQLFSGFSQVLLQTHGDDVYLSTEEHNGNAARGLPVHSSFKQNNSSQTSSNKGTTTVAAGSGSDGSRVSAVVNTADISENYTFDAPANELYATFLDPARVAAWSRAPPQLDVRPQGAFSLFHGNVVGKFLVLEENKKIVQTWRLSSWPTGHYAEITFTFDQADSYTTLRMIMKGVPIGEEEVVQGNIQDYYIRPIKTVFGFGAVL</sequence>
<dbReference type="EMBL" id="D89201">
    <property type="protein sequence ID" value="BAA13862.1"/>
    <property type="status" value="ALT_INIT"/>
    <property type="molecule type" value="mRNA"/>
</dbReference>
<dbReference type="EMBL" id="CU329671">
    <property type="protein sequence ID" value="CAB88238.1"/>
    <property type="molecule type" value="Genomic_DNA"/>
</dbReference>
<dbReference type="PIR" id="T43001">
    <property type="entry name" value="T43001"/>
</dbReference>
<dbReference type="SMR" id="Q9P782"/>
<dbReference type="BioGRID" id="276356">
    <property type="interactions" value="6"/>
</dbReference>
<dbReference type="FunCoup" id="Q9P782">
    <property type="interactions" value="948"/>
</dbReference>
<dbReference type="STRING" id="284812.Q9P782"/>
<dbReference type="iPTMnet" id="Q9P782"/>
<dbReference type="PaxDb" id="4896-SPBC1711.08.1"/>
<dbReference type="EnsemblFungi" id="SPBC1711.08.1">
    <property type="protein sequence ID" value="SPBC1711.08.1:pep"/>
    <property type="gene ID" value="SPBC1711.08"/>
</dbReference>
<dbReference type="KEGG" id="spo:2539806"/>
<dbReference type="PomBase" id="SPBC1711.08"/>
<dbReference type="VEuPathDB" id="FungiDB:SPBC1711.08"/>
<dbReference type="eggNOG" id="KOG2936">
    <property type="taxonomic scope" value="Eukaryota"/>
</dbReference>
<dbReference type="HOGENOM" id="CLU_049046_1_0_1"/>
<dbReference type="InParanoid" id="Q9P782"/>
<dbReference type="OMA" id="GDCEVNQ"/>
<dbReference type="PhylomeDB" id="Q9P782"/>
<dbReference type="PRO" id="PR:Q9P782"/>
<dbReference type="Proteomes" id="UP000002485">
    <property type="component" value="Chromosome II"/>
</dbReference>
<dbReference type="GO" id="GO:0005829">
    <property type="term" value="C:cytosol"/>
    <property type="evidence" value="ECO:0007005"/>
    <property type="project" value="PomBase"/>
</dbReference>
<dbReference type="GO" id="GO:0001671">
    <property type="term" value="F:ATPase activator activity"/>
    <property type="evidence" value="ECO:0000314"/>
    <property type="project" value="PomBase"/>
</dbReference>
<dbReference type="GO" id="GO:0051087">
    <property type="term" value="F:protein-folding chaperone binding"/>
    <property type="evidence" value="ECO:0007669"/>
    <property type="project" value="InterPro"/>
</dbReference>
<dbReference type="GO" id="GO:0006457">
    <property type="term" value="P:protein folding"/>
    <property type="evidence" value="ECO:0000314"/>
    <property type="project" value="PomBase"/>
</dbReference>
<dbReference type="CDD" id="cd08892">
    <property type="entry name" value="SRPBCC_Aha1"/>
    <property type="match status" value="1"/>
</dbReference>
<dbReference type="FunFam" id="3.15.10.20:FF:000004">
    <property type="entry name" value="Hsp90 co-chaperone AHA1"/>
    <property type="match status" value="1"/>
</dbReference>
<dbReference type="Gene3D" id="3.30.530.20">
    <property type="match status" value="1"/>
</dbReference>
<dbReference type="Gene3D" id="3.15.10.20">
    <property type="entry name" value="Activator of Hsp90 ATPase Aha1, N-terminal domain"/>
    <property type="match status" value="1"/>
</dbReference>
<dbReference type="InterPro" id="IPR036338">
    <property type="entry name" value="Aha1"/>
</dbReference>
<dbReference type="InterPro" id="IPR015310">
    <property type="entry name" value="AHSA1-like_N"/>
</dbReference>
<dbReference type="InterPro" id="IPR013538">
    <property type="entry name" value="ASHA1/2-like_C"/>
</dbReference>
<dbReference type="InterPro" id="IPR023393">
    <property type="entry name" value="START-like_dom_sf"/>
</dbReference>
<dbReference type="PANTHER" id="PTHR13009">
    <property type="entry name" value="HEAT SHOCK PROTEIN 90 HSP90 CO-CHAPERONE AHA-1"/>
    <property type="match status" value="1"/>
</dbReference>
<dbReference type="PANTHER" id="PTHR13009:SF22">
    <property type="entry name" value="LD43819P"/>
    <property type="match status" value="1"/>
</dbReference>
<dbReference type="Pfam" id="PF09229">
    <property type="entry name" value="Aha1_N"/>
    <property type="match status" value="1"/>
</dbReference>
<dbReference type="Pfam" id="PF08327">
    <property type="entry name" value="AHSA1"/>
    <property type="match status" value="1"/>
</dbReference>
<dbReference type="SMART" id="SM01000">
    <property type="entry name" value="Aha1_N"/>
    <property type="match status" value="1"/>
</dbReference>
<dbReference type="SUPFAM" id="SSF103111">
    <property type="entry name" value="Activator of Hsp90 ATPase, Aha1"/>
    <property type="match status" value="1"/>
</dbReference>
<dbReference type="SUPFAM" id="SSF55961">
    <property type="entry name" value="Bet v1-like"/>
    <property type="match status" value="1"/>
</dbReference>
<reference key="1">
    <citation type="journal article" date="1997" name="DNA Res.">
        <title>Identification of open reading frames in Schizosaccharomyces pombe cDNAs.</title>
        <authorList>
            <person name="Yoshioka S."/>
            <person name="Kato K."/>
            <person name="Nakai K."/>
            <person name="Okayama H."/>
            <person name="Nojima H."/>
        </authorList>
    </citation>
    <scope>NUCLEOTIDE SEQUENCE [LARGE SCALE MRNA]</scope>
    <source>
        <strain>PR745</strain>
    </source>
</reference>
<reference key="2">
    <citation type="journal article" date="2002" name="Nature">
        <title>The genome sequence of Schizosaccharomyces pombe.</title>
        <authorList>
            <person name="Wood V."/>
            <person name="Gwilliam R."/>
            <person name="Rajandream M.A."/>
            <person name="Lyne M.H."/>
            <person name="Lyne R."/>
            <person name="Stewart A."/>
            <person name="Sgouros J.G."/>
            <person name="Peat N."/>
            <person name="Hayles J."/>
            <person name="Baker S.G."/>
            <person name="Basham D."/>
            <person name="Bowman S."/>
            <person name="Brooks K."/>
            <person name="Brown D."/>
            <person name="Brown S."/>
            <person name="Chillingworth T."/>
            <person name="Churcher C.M."/>
            <person name="Collins M."/>
            <person name="Connor R."/>
            <person name="Cronin A."/>
            <person name="Davis P."/>
            <person name="Feltwell T."/>
            <person name="Fraser A."/>
            <person name="Gentles S."/>
            <person name="Goble A."/>
            <person name="Hamlin N."/>
            <person name="Harris D.E."/>
            <person name="Hidalgo J."/>
            <person name="Hodgson G."/>
            <person name="Holroyd S."/>
            <person name="Hornsby T."/>
            <person name="Howarth S."/>
            <person name="Huckle E.J."/>
            <person name="Hunt S."/>
            <person name="Jagels K."/>
            <person name="James K.D."/>
            <person name="Jones L."/>
            <person name="Jones M."/>
            <person name="Leather S."/>
            <person name="McDonald S."/>
            <person name="McLean J."/>
            <person name="Mooney P."/>
            <person name="Moule S."/>
            <person name="Mungall K.L."/>
            <person name="Murphy L.D."/>
            <person name="Niblett D."/>
            <person name="Odell C."/>
            <person name="Oliver K."/>
            <person name="O'Neil S."/>
            <person name="Pearson D."/>
            <person name="Quail M.A."/>
            <person name="Rabbinowitsch E."/>
            <person name="Rutherford K.M."/>
            <person name="Rutter S."/>
            <person name="Saunders D."/>
            <person name="Seeger K."/>
            <person name="Sharp S."/>
            <person name="Skelton J."/>
            <person name="Simmonds M.N."/>
            <person name="Squares R."/>
            <person name="Squares S."/>
            <person name="Stevens K."/>
            <person name="Taylor K."/>
            <person name="Taylor R.G."/>
            <person name="Tivey A."/>
            <person name="Walsh S.V."/>
            <person name="Warren T."/>
            <person name="Whitehead S."/>
            <person name="Woodward J.R."/>
            <person name="Volckaert G."/>
            <person name="Aert R."/>
            <person name="Robben J."/>
            <person name="Grymonprez B."/>
            <person name="Weltjens I."/>
            <person name="Vanstreels E."/>
            <person name="Rieger M."/>
            <person name="Schaefer M."/>
            <person name="Mueller-Auer S."/>
            <person name="Gabel C."/>
            <person name="Fuchs M."/>
            <person name="Duesterhoeft A."/>
            <person name="Fritzc C."/>
            <person name="Holzer E."/>
            <person name="Moestl D."/>
            <person name="Hilbert H."/>
            <person name="Borzym K."/>
            <person name="Langer I."/>
            <person name="Beck A."/>
            <person name="Lehrach H."/>
            <person name="Reinhardt R."/>
            <person name="Pohl T.M."/>
            <person name="Eger P."/>
            <person name="Zimmermann W."/>
            <person name="Wedler H."/>
            <person name="Wambutt R."/>
            <person name="Purnelle B."/>
            <person name="Goffeau A."/>
            <person name="Cadieu E."/>
            <person name="Dreano S."/>
            <person name="Gloux S."/>
            <person name="Lelaure V."/>
            <person name="Mottier S."/>
            <person name="Galibert F."/>
            <person name="Aves S.J."/>
            <person name="Xiang Z."/>
            <person name="Hunt C."/>
            <person name="Moore K."/>
            <person name="Hurst S.M."/>
            <person name="Lucas M."/>
            <person name="Rochet M."/>
            <person name="Gaillardin C."/>
            <person name="Tallada V.A."/>
            <person name="Garzon A."/>
            <person name="Thode G."/>
            <person name="Daga R.R."/>
            <person name="Cruzado L."/>
            <person name="Jimenez J."/>
            <person name="Sanchez M."/>
            <person name="del Rey F."/>
            <person name="Benito J."/>
            <person name="Dominguez A."/>
            <person name="Revuelta J.L."/>
            <person name="Moreno S."/>
            <person name="Armstrong J."/>
            <person name="Forsburg S.L."/>
            <person name="Cerutti L."/>
            <person name="Lowe T."/>
            <person name="McCombie W.R."/>
            <person name="Paulsen I."/>
            <person name="Potashkin J."/>
            <person name="Shpakovski G.V."/>
            <person name="Ussery D."/>
            <person name="Barrell B.G."/>
            <person name="Nurse P."/>
        </authorList>
    </citation>
    <scope>NUCLEOTIDE SEQUENCE [LARGE SCALE GENOMIC DNA]</scope>
    <source>
        <strain>972 / ATCC 24843</strain>
    </source>
</reference>
<protein>
    <recommendedName>
        <fullName>Uncharacterized protein C1711.08</fullName>
    </recommendedName>
</protein>
<organism>
    <name type="scientific">Schizosaccharomyces pombe (strain 972 / ATCC 24843)</name>
    <name type="common">Fission yeast</name>
    <dbReference type="NCBI Taxonomy" id="284812"/>
    <lineage>
        <taxon>Eukaryota</taxon>
        <taxon>Fungi</taxon>
        <taxon>Dikarya</taxon>
        <taxon>Ascomycota</taxon>
        <taxon>Taphrinomycotina</taxon>
        <taxon>Schizosaccharomycetes</taxon>
        <taxon>Schizosaccharomycetales</taxon>
        <taxon>Schizosaccharomycetaceae</taxon>
        <taxon>Schizosaccharomyces</taxon>
    </lineage>
</organism>
<evidence type="ECO:0000256" key="1">
    <source>
        <dbReference type="SAM" id="MobiDB-lite"/>
    </source>
</evidence>
<evidence type="ECO:0000305" key="2"/>
<name>YNY8_SCHPO</name>
<accession>Q9P782</accession>
<accession>P78851</accession>
<keyword id="KW-1185">Reference proteome</keyword>